<protein>
    <recommendedName>
        <fullName evidence="8">ATP-dependent DNA/RNA helicase DHX36</fullName>
        <ecNumber evidence="3">3.6.4.12</ecNumber>
        <ecNumber evidence="3">3.6.4.13</ecNumber>
    </recommendedName>
    <alternativeName>
        <fullName evidence="3">DEAD/H box polypeptide 36</fullName>
    </alternativeName>
    <alternativeName>
        <fullName evidence="8">DEAH-box protein 36</fullName>
    </alternativeName>
    <alternativeName>
        <fullName evidence="3">G4-resolvase-1</fullName>
        <shortName evidence="3">G4R1</shortName>
    </alternativeName>
    <alternativeName>
        <fullName evidence="3">MLE-like protein 1</fullName>
    </alternativeName>
    <alternativeName>
        <fullName evidence="3">RNA helicase associated with AU-rich element protein</fullName>
    </alternativeName>
</protein>
<dbReference type="EC" id="3.6.4.12" evidence="3"/>
<dbReference type="EC" id="3.6.4.13" evidence="3"/>
<dbReference type="EMBL" id="DAAA02002573">
    <property type="status" value="NOT_ANNOTATED_CDS"/>
    <property type="molecule type" value="Genomic_DNA"/>
</dbReference>
<dbReference type="EMBL" id="DAAA02002574">
    <property type="status" value="NOT_ANNOTATED_CDS"/>
    <property type="molecule type" value="Genomic_DNA"/>
</dbReference>
<dbReference type="EMBL" id="BC122652">
    <property type="protein sequence ID" value="AAI22653.1"/>
    <property type="molecule type" value="mRNA"/>
</dbReference>
<dbReference type="RefSeq" id="NP_001073720.1">
    <property type="nucleotide sequence ID" value="NM_001080251.1"/>
</dbReference>
<dbReference type="PDB" id="5VHA">
    <property type="method" value="X-ray"/>
    <property type="resolution" value="2.23 A"/>
    <property type="chains" value="A=150-1010"/>
</dbReference>
<dbReference type="PDB" id="5VHC">
    <property type="method" value="X-ray"/>
    <property type="resolution" value="2.49 A"/>
    <property type="chains" value="D=150-1010"/>
</dbReference>
<dbReference type="PDB" id="5VHD">
    <property type="method" value="X-ray"/>
    <property type="resolution" value="2.55 A"/>
    <property type="chains" value="D=150-1010"/>
</dbReference>
<dbReference type="PDB" id="5VHE">
    <property type="method" value="X-ray"/>
    <property type="resolution" value="3.79 A"/>
    <property type="chains" value="A=56-1010"/>
</dbReference>
<dbReference type="PDBsum" id="5VHA"/>
<dbReference type="PDBsum" id="5VHC"/>
<dbReference type="PDBsum" id="5VHD"/>
<dbReference type="PDBsum" id="5VHE"/>
<dbReference type="SMR" id="Q05B79"/>
<dbReference type="FunCoup" id="Q05B79">
    <property type="interactions" value="4226"/>
</dbReference>
<dbReference type="STRING" id="9913.ENSBTAP00000008082"/>
<dbReference type="PaxDb" id="9913-ENSBTAP00000008082"/>
<dbReference type="GeneID" id="509583"/>
<dbReference type="KEGG" id="bta:509583"/>
<dbReference type="CTD" id="170506"/>
<dbReference type="VEuPathDB" id="HostDB:ENSBTAG00000006142"/>
<dbReference type="eggNOG" id="KOG0920">
    <property type="taxonomic scope" value="Eukaryota"/>
</dbReference>
<dbReference type="HOGENOM" id="CLU_001832_1_4_1"/>
<dbReference type="InParanoid" id="Q05B79"/>
<dbReference type="OMA" id="WLQSDKH"/>
<dbReference type="OrthoDB" id="5600252at2759"/>
<dbReference type="TreeFam" id="TF324744"/>
<dbReference type="Reactome" id="R-BTA-3134963">
    <property type="pathway name" value="DEx/H-box helicases activate type I IFN and inflammatory cytokines production"/>
</dbReference>
<dbReference type="Proteomes" id="UP000009136">
    <property type="component" value="Chromosome 1"/>
</dbReference>
<dbReference type="Bgee" id="ENSBTAG00000006142">
    <property type="expression patterns" value="Expressed in spermatid and 107 other cell types or tissues"/>
</dbReference>
<dbReference type="GO" id="GO:0030424">
    <property type="term" value="C:axon"/>
    <property type="evidence" value="ECO:0000250"/>
    <property type="project" value="UniProtKB"/>
</dbReference>
<dbReference type="GO" id="GO:0000781">
    <property type="term" value="C:chromosome, telomeric region"/>
    <property type="evidence" value="ECO:0000250"/>
    <property type="project" value="UniProtKB"/>
</dbReference>
<dbReference type="GO" id="GO:0005737">
    <property type="term" value="C:cytoplasm"/>
    <property type="evidence" value="ECO:0000250"/>
    <property type="project" value="UniProtKB"/>
</dbReference>
<dbReference type="GO" id="GO:0010494">
    <property type="term" value="C:cytoplasmic stress granule"/>
    <property type="evidence" value="ECO:0000250"/>
    <property type="project" value="UniProtKB"/>
</dbReference>
<dbReference type="GO" id="GO:0005829">
    <property type="term" value="C:cytosol"/>
    <property type="evidence" value="ECO:0000250"/>
    <property type="project" value="UniProtKB"/>
</dbReference>
<dbReference type="GO" id="GO:0030425">
    <property type="term" value="C:dendrite"/>
    <property type="evidence" value="ECO:0000250"/>
    <property type="project" value="UniProtKB"/>
</dbReference>
<dbReference type="GO" id="GO:0005739">
    <property type="term" value="C:mitochondrion"/>
    <property type="evidence" value="ECO:0007669"/>
    <property type="project" value="UniProtKB-SubCell"/>
</dbReference>
<dbReference type="GO" id="GO:0016607">
    <property type="term" value="C:nuclear speck"/>
    <property type="evidence" value="ECO:0000250"/>
    <property type="project" value="UniProtKB"/>
</dbReference>
<dbReference type="GO" id="GO:0005634">
    <property type="term" value="C:nucleus"/>
    <property type="evidence" value="ECO:0000250"/>
    <property type="project" value="UniProtKB"/>
</dbReference>
<dbReference type="GO" id="GO:0043204">
    <property type="term" value="C:perikaryon"/>
    <property type="evidence" value="ECO:0000250"/>
    <property type="project" value="UniProtKB"/>
</dbReference>
<dbReference type="GO" id="GO:0005524">
    <property type="term" value="F:ATP binding"/>
    <property type="evidence" value="ECO:0000314"/>
    <property type="project" value="UniProtKB"/>
</dbReference>
<dbReference type="GO" id="GO:0016887">
    <property type="term" value="F:ATP hydrolysis activity"/>
    <property type="evidence" value="ECO:0007669"/>
    <property type="project" value="RHEA"/>
</dbReference>
<dbReference type="GO" id="GO:0140640">
    <property type="term" value="F:catalytic activity, acting on a nucleic acid"/>
    <property type="evidence" value="ECO:0000314"/>
    <property type="project" value="UniProtKB"/>
</dbReference>
<dbReference type="GO" id="GO:0003678">
    <property type="term" value="F:DNA helicase activity"/>
    <property type="evidence" value="ECO:0000250"/>
    <property type="project" value="UniProtKB"/>
</dbReference>
<dbReference type="GO" id="GO:0003725">
    <property type="term" value="F:double-stranded RNA binding"/>
    <property type="evidence" value="ECO:0007669"/>
    <property type="project" value="Ensembl"/>
</dbReference>
<dbReference type="GO" id="GO:0051880">
    <property type="term" value="F:G-quadruplex DNA binding"/>
    <property type="evidence" value="ECO:0000314"/>
    <property type="project" value="UniProtKB"/>
</dbReference>
<dbReference type="GO" id="GO:0002151">
    <property type="term" value="F:G-quadruplex RNA binding"/>
    <property type="evidence" value="ECO:0000250"/>
    <property type="project" value="UniProtKB"/>
</dbReference>
<dbReference type="GO" id="GO:0042826">
    <property type="term" value="F:histone deacetylase binding"/>
    <property type="evidence" value="ECO:0007669"/>
    <property type="project" value="Ensembl"/>
</dbReference>
<dbReference type="GO" id="GO:0000287">
    <property type="term" value="F:magnesium ion binding"/>
    <property type="evidence" value="ECO:0000314"/>
    <property type="project" value="UniProtKB"/>
</dbReference>
<dbReference type="GO" id="GO:0035925">
    <property type="term" value="F:mRNA 3'-UTR AU-rich region binding"/>
    <property type="evidence" value="ECO:0000250"/>
    <property type="project" value="UniProtKB"/>
</dbReference>
<dbReference type="GO" id="GO:0003730">
    <property type="term" value="F:mRNA 3'-UTR binding"/>
    <property type="evidence" value="ECO:0000250"/>
    <property type="project" value="UniProtKB"/>
</dbReference>
<dbReference type="GO" id="GO:0048027">
    <property type="term" value="F:mRNA 5'-UTR binding"/>
    <property type="evidence" value="ECO:0000250"/>
    <property type="project" value="UniProtKB"/>
</dbReference>
<dbReference type="GO" id="GO:0070883">
    <property type="term" value="F:pre-miRNA binding"/>
    <property type="evidence" value="ECO:0000250"/>
    <property type="project" value="UniProtKB"/>
</dbReference>
<dbReference type="GO" id="GO:0003723">
    <property type="term" value="F:RNA binding"/>
    <property type="evidence" value="ECO:0000250"/>
    <property type="project" value="UniProtKB"/>
</dbReference>
<dbReference type="GO" id="GO:0003724">
    <property type="term" value="F:RNA helicase activity"/>
    <property type="evidence" value="ECO:0000250"/>
    <property type="project" value="UniProtKB"/>
</dbReference>
<dbReference type="GO" id="GO:0000978">
    <property type="term" value="F:RNA polymerase II cis-regulatory region sequence-specific DNA binding"/>
    <property type="evidence" value="ECO:0000250"/>
    <property type="project" value="UniProtKB"/>
</dbReference>
<dbReference type="GO" id="GO:0003697">
    <property type="term" value="F:single-stranded DNA binding"/>
    <property type="evidence" value="ECO:0007669"/>
    <property type="project" value="Ensembl"/>
</dbReference>
<dbReference type="GO" id="GO:0070034">
    <property type="term" value="F:telomerase RNA binding"/>
    <property type="evidence" value="ECO:0000250"/>
    <property type="project" value="UniProtKB"/>
</dbReference>
<dbReference type="GO" id="GO:0061158">
    <property type="term" value="P:3'-UTR-mediated mRNA destabilization"/>
    <property type="evidence" value="ECO:0000250"/>
    <property type="project" value="UniProtKB"/>
</dbReference>
<dbReference type="GO" id="GO:0030154">
    <property type="term" value="P:cell differentiation"/>
    <property type="evidence" value="ECO:0007669"/>
    <property type="project" value="UniProtKB-KW"/>
</dbReference>
<dbReference type="GO" id="GO:1903843">
    <property type="term" value="P:cellular response to arsenite ion"/>
    <property type="evidence" value="ECO:0000250"/>
    <property type="project" value="UniProtKB"/>
</dbReference>
<dbReference type="GO" id="GO:0034605">
    <property type="term" value="P:cellular response to heat"/>
    <property type="evidence" value="ECO:0000250"/>
    <property type="project" value="UniProtKB"/>
</dbReference>
<dbReference type="GO" id="GO:0034644">
    <property type="term" value="P:cellular response to UV"/>
    <property type="evidence" value="ECO:0000250"/>
    <property type="project" value="UniProtKB"/>
</dbReference>
<dbReference type="GO" id="GO:0051607">
    <property type="term" value="P:defense response to virus"/>
    <property type="evidence" value="ECO:0007669"/>
    <property type="project" value="UniProtKB-KW"/>
</dbReference>
<dbReference type="GO" id="GO:0045087">
    <property type="term" value="P:innate immune response"/>
    <property type="evidence" value="ECO:0007669"/>
    <property type="project" value="UniProtKB-KW"/>
</dbReference>
<dbReference type="GO" id="GO:0017148">
    <property type="term" value="P:negative regulation of translation"/>
    <property type="evidence" value="ECO:0000250"/>
    <property type="project" value="UniProtKB"/>
</dbReference>
<dbReference type="GO" id="GO:0001503">
    <property type="term" value="P:ossification"/>
    <property type="evidence" value="ECO:0007669"/>
    <property type="project" value="Ensembl"/>
</dbReference>
<dbReference type="GO" id="GO:0043123">
    <property type="term" value="P:positive regulation of canonical NF-kappaB signal transduction"/>
    <property type="evidence" value="ECO:0000250"/>
    <property type="project" value="UniProtKB"/>
</dbReference>
<dbReference type="GO" id="GO:0051891">
    <property type="term" value="P:positive regulation of cardioblast differentiation"/>
    <property type="evidence" value="ECO:0000250"/>
    <property type="project" value="UniProtKB"/>
</dbReference>
<dbReference type="GO" id="GO:2000767">
    <property type="term" value="P:positive regulation of cytoplasmic translation"/>
    <property type="evidence" value="ECO:0000250"/>
    <property type="project" value="UniProtKB"/>
</dbReference>
<dbReference type="GO" id="GO:0061003">
    <property type="term" value="P:positive regulation of dendritic spine morphogenesis"/>
    <property type="evidence" value="ECO:0000250"/>
    <property type="project" value="UniProtKB"/>
</dbReference>
<dbReference type="GO" id="GO:0010628">
    <property type="term" value="P:positive regulation of gene expression"/>
    <property type="evidence" value="ECO:0000250"/>
    <property type="project" value="UniProtKB"/>
</dbReference>
<dbReference type="GO" id="GO:1901534">
    <property type="term" value="P:positive regulation of hematopoietic progenitor cell differentiation"/>
    <property type="evidence" value="ECO:0000250"/>
    <property type="project" value="UniProtKB"/>
</dbReference>
<dbReference type="GO" id="GO:0032727">
    <property type="term" value="P:positive regulation of interferon-alpha production"/>
    <property type="evidence" value="ECO:0007669"/>
    <property type="project" value="Ensembl"/>
</dbReference>
<dbReference type="GO" id="GO:1904582">
    <property type="term" value="P:positive regulation of intracellular mRNA localization"/>
    <property type="evidence" value="ECO:0000250"/>
    <property type="project" value="UniProtKB"/>
</dbReference>
<dbReference type="GO" id="GO:0031442">
    <property type="term" value="P:positive regulation of mRNA 3'-end processing"/>
    <property type="evidence" value="ECO:0000250"/>
    <property type="project" value="UniProtKB"/>
</dbReference>
<dbReference type="GO" id="GO:0002735">
    <property type="term" value="P:positive regulation of myeloid dendritic cell cytokine production"/>
    <property type="evidence" value="ECO:0007669"/>
    <property type="project" value="Ensembl"/>
</dbReference>
<dbReference type="GO" id="GO:1900153">
    <property type="term" value="P:positive regulation of nuclear-transcribed mRNA catabolic process, deadenylation-dependent decay"/>
    <property type="evidence" value="ECO:0000250"/>
    <property type="project" value="UniProtKB"/>
</dbReference>
<dbReference type="GO" id="GO:1904358">
    <property type="term" value="P:positive regulation of telomere maintenance via telomere lengthening"/>
    <property type="evidence" value="ECO:0000250"/>
    <property type="project" value="UniProtKB"/>
</dbReference>
<dbReference type="GO" id="GO:0045944">
    <property type="term" value="P:positive regulation of transcription by RNA polymerase II"/>
    <property type="evidence" value="ECO:0000250"/>
    <property type="project" value="UniProtKB"/>
</dbReference>
<dbReference type="GO" id="GO:0060261">
    <property type="term" value="P:positive regulation of transcription initiation by RNA polymerase II"/>
    <property type="evidence" value="ECO:0000250"/>
    <property type="project" value="UniProtKB"/>
</dbReference>
<dbReference type="GO" id="GO:0045995">
    <property type="term" value="P:regulation of embryonic development"/>
    <property type="evidence" value="ECO:0000250"/>
    <property type="project" value="UniProtKB"/>
</dbReference>
<dbReference type="GO" id="GO:0043488">
    <property type="term" value="P:regulation of mRNA stability"/>
    <property type="evidence" value="ECO:0000250"/>
    <property type="project" value="UniProtKB"/>
</dbReference>
<dbReference type="GO" id="GO:0006359">
    <property type="term" value="P:regulation of transcription by RNA polymerase III"/>
    <property type="evidence" value="ECO:0000250"/>
    <property type="project" value="UniProtKB"/>
</dbReference>
<dbReference type="GO" id="GO:0043330">
    <property type="term" value="P:response to exogenous dsRNA"/>
    <property type="evidence" value="ECO:0007669"/>
    <property type="project" value="Ensembl"/>
</dbReference>
<dbReference type="GO" id="GO:0007283">
    <property type="term" value="P:spermatogenesis"/>
    <property type="evidence" value="ECO:0000250"/>
    <property type="project" value="UniProtKB"/>
</dbReference>
<dbReference type="GO" id="GO:0090669">
    <property type="term" value="P:telomerase RNA stabilization"/>
    <property type="evidence" value="ECO:0007669"/>
    <property type="project" value="Ensembl"/>
</dbReference>
<dbReference type="CDD" id="cd17981">
    <property type="entry name" value="DEXHc_DHX36"/>
    <property type="match status" value="1"/>
</dbReference>
<dbReference type="CDD" id="cd18791">
    <property type="entry name" value="SF2_C_RHA"/>
    <property type="match status" value="1"/>
</dbReference>
<dbReference type="FunFam" id="1.20.120.1080:FF:000002">
    <property type="entry name" value="Putative ATP-dependent RNA helicase DHX36"/>
    <property type="match status" value="1"/>
</dbReference>
<dbReference type="FunFam" id="3.40.50.300:FF:000670">
    <property type="entry name" value="Putative ATP-dependent RNA helicase DHX36"/>
    <property type="match status" value="1"/>
</dbReference>
<dbReference type="FunFam" id="3.40.50.300:FF:000739">
    <property type="entry name" value="Putative ATP-dependent RNA helicase DHX36"/>
    <property type="match status" value="1"/>
</dbReference>
<dbReference type="Gene3D" id="1.20.120.1080">
    <property type="match status" value="1"/>
</dbReference>
<dbReference type="Gene3D" id="3.40.50.300">
    <property type="entry name" value="P-loop containing nucleotide triphosphate hydrolases"/>
    <property type="match status" value="2"/>
</dbReference>
<dbReference type="InterPro" id="IPR011709">
    <property type="entry name" value="DEAD-box_helicase_OB_fold"/>
</dbReference>
<dbReference type="InterPro" id="IPR011545">
    <property type="entry name" value="DEAD/DEAH_box_helicase_dom"/>
</dbReference>
<dbReference type="InterPro" id="IPR002464">
    <property type="entry name" value="DNA/RNA_helicase_DEAH_CS"/>
</dbReference>
<dbReference type="InterPro" id="IPR048333">
    <property type="entry name" value="HA2_WH"/>
</dbReference>
<dbReference type="InterPro" id="IPR007502">
    <property type="entry name" value="Helicase-assoc_dom"/>
</dbReference>
<dbReference type="InterPro" id="IPR014001">
    <property type="entry name" value="Helicase_ATP-bd"/>
</dbReference>
<dbReference type="InterPro" id="IPR001650">
    <property type="entry name" value="Helicase_C-like"/>
</dbReference>
<dbReference type="InterPro" id="IPR027417">
    <property type="entry name" value="P-loop_NTPase"/>
</dbReference>
<dbReference type="PANTHER" id="PTHR18934:SF237">
    <property type="entry name" value="ATP-DEPENDENT DNA_RNA HELICASE DHX36"/>
    <property type="match status" value="1"/>
</dbReference>
<dbReference type="PANTHER" id="PTHR18934">
    <property type="entry name" value="ATP-DEPENDENT RNA HELICASE"/>
    <property type="match status" value="1"/>
</dbReference>
<dbReference type="Pfam" id="PF00270">
    <property type="entry name" value="DEAD"/>
    <property type="match status" value="1"/>
</dbReference>
<dbReference type="Pfam" id="PF21010">
    <property type="entry name" value="HA2_C"/>
    <property type="match status" value="1"/>
</dbReference>
<dbReference type="Pfam" id="PF04408">
    <property type="entry name" value="HA2_N"/>
    <property type="match status" value="1"/>
</dbReference>
<dbReference type="Pfam" id="PF00271">
    <property type="entry name" value="Helicase_C"/>
    <property type="match status" value="1"/>
</dbReference>
<dbReference type="Pfam" id="PF07717">
    <property type="entry name" value="OB_NTP_bind"/>
    <property type="match status" value="1"/>
</dbReference>
<dbReference type="SMART" id="SM00487">
    <property type="entry name" value="DEXDc"/>
    <property type="match status" value="1"/>
</dbReference>
<dbReference type="SMART" id="SM00847">
    <property type="entry name" value="HA2"/>
    <property type="match status" value="1"/>
</dbReference>
<dbReference type="SMART" id="SM00490">
    <property type="entry name" value="HELICc"/>
    <property type="match status" value="1"/>
</dbReference>
<dbReference type="SUPFAM" id="SSF52540">
    <property type="entry name" value="P-loop containing nucleoside triphosphate hydrolases"/>
    <property type="match status" value="1"/>
</dbReference>
<dbReference type="PROSITE" id="PS00690">
    <property type="entry name" value="DEAH_ATP_HELICASE"/>
    <property type="match status" value="1"/>
</dbReference>
<dbReference type="PROSITE" id="PS51192">
    <property type="entry name" value="HELICASE_ATP_BIND_1"/>
    <property type="match status" value="1"/>
</dbReference>
<dbReference type="PROSITE" id="PS51194">
    <property type="entry name" value="HELICASE_CTER"/>
    <property type="match status" value="1"/>
</dbReference>
<keyword id="KW-0002">3D-structure</keyword>
<keyword id="KW-0007">Acetylation</keyword>
<keyword id="KW-0010">Activator</keyword>
<keyword id="KW-0051">Antiviral defense</keyword>
<keyword id="KW-0067">ATP-binding</keyword>
<keyword id="KW-0966">Cell projection</keyword>
<keyword id="KW-0158">Chromosome</keyword>
<keyword id="KW-0963">Cytoplasm</keyword>
<keyword id="KW-0217">Developmental protein</keyword>
<keyword id="KW-0221">Differentiation</keyword>
<keyword id="KW-0238">DNA-binding</keyword>
<keyword id="KW-0347">Helicase</keyword>
<keyword id="KW-0378">Hydrolase</keyword>
<keyword id="KW-0391">Immunity</keyword>
<keyword id="KW-0399">Innate immunity</keyword>
<keyword id="KW-0460">Magnesium</keyword>
<keyword id="KW-0479">Metal-binding</keyword>
<keyword id="KW-0496">Mitochondrion</keyword>
<keyword id="KW-0547">Nucleotide-binding</keyword>
<keyword id="KW-0539">Nucleus</keyword>
<keyword id="KW-0597">Phosphoprotein</keyword>
<keyword id="KW-1185">Reference proteome</keyword>
<keyword id="KW-0677">Repeat</keyword>
<keyword id="KW-0678">Repressor</keyword>
<keyword id="KW-0694">RNA-binding</keyword>
<keyword id="KW-0779">Telomere</keyword>
<keyword id="KW-0804">Transcription</keyword>
<keyword id="KW-0805">Transcription regulation</keyword>
<keyword id="KW-0810">Translation regulation</keyword>
<keyword id="KW-0813">Transport</keyword>
<sequence>MSYDYHQNWGRDGGPRSSGGGYGGSYGGSHGGGHGGNRGSGGGGGGGGGRGGRGRHPGHLKGREIGLWYAKKQGQKNKEAERQERAVVHMDERREEQIVQLLHSVQTKNDKDEEAQISWFAPEDHGYGTEAPAENKPNSVKNVEHQEKKMINQEKRPFRIRDKYIDRDSEYLLQENEPDATLDQQLLEDLQKKKTDLRYIEMQRFREKLPSYGMQKELVNMIDNHQVTVISGETGCGKTTQVTQFILDNYIERGKGSACRIVCTQPRRISAISVAERVAAERAESCGNGNSTGYQIRLQSRLPRKQGSILYCTTGIILQWLQSDPHLSSVSHIVLDEIHERNLQSDVLMTVVKDLLSYRPDLKVVLMSATLNAEKFSEYFGNCPMIHIPGFTFPVVEYLLEDIIEKIRYVPEQKEHRSQFKKGFMQGHVNRQEKEEKEAIYKERWPGYLRELRQRYSASTVDVVEMMDDEKVDLNLIAALIRYIVLEEEDGAILVFLPGWDNISTLHDLLMSQVMFKSDKFIIIPLHSLMPTVNQTQVFKRTPPGVRKIVIATNIAETSITIDDVVYVIDGGKIKETHFDTQNNISTMSAEWVSKANAKQRKGRAGRVQPGHCYHLYNSLRASLLDDYQLPEILRTPLEELCLQIKILRLGGIAHFLSRLMDPPSNEAVLLSIKHLMELNALDKQEELTPLGVHLARLPVEPHIGKMILFGALFCCLDPVLTIAASLSFKDPFVIPLGKEKVADARRKELAKDTKSDHLTVVNAFKGWEKAKQRGFRYEKDYCWEYFLSSNTLQMLHNMKGQFAEHLLGAGFVSSRNPQDPESNINSDNEKIIKAVICAGLYPKVAKIRLNLGKKRKMVKVYTKTDGVVAIHPKSVNVEQTEFNYNWLIYHLKMRTSSIYLYDCTEVSPYCLLFFGGDISIQKDNDQETIAVDEWIIFQSPARIAHLVKELRKELDILLQEKIESPHPVDWKDTKSRDCAVLSAIIDLIKTQEKATPRNLPPRFQDGYYS</sequence>
<evidence type="ECO:0000250" key="1">
    <source>
        <dbReference type="UniProtKB" id="D4A2Z8"/>
    </source>
</evidence>
<evidence type="ECO:0000250" key="2">
    <source>
        <dbReference type="UniProtKB" id="Q8VHK9"/>
    </source>
</evidence>
<evidence type="ECO:0000250" key="3">
    <source>
        <dbReference type="UniProtKB" id="Q9H2U1"/>
    </source>
</evidence>
<evidence type="ECO:0000255" key="4">
    <source>
        <dbReference type="PROSITE-ProRule" id="PRU00541"/>
    </source>
</evidence>
<evidence type="ECO:0000255" key="5">
    <source>
        <dbReference type="PROSITE-ProRule" id="PRU00542"/>
    </source>
</evidence>
<evidence type="ECO:0000256" key="6">
    <source>
        <dbReference type="SAM" id="MobiDB-lite"/>
    </source>
</evidence>
<evidence type="ECO:0000269" key="7">
    <source>
    </source>
</evidence>
<evidence type="ECO:0000305" key="8"/>
<evidence type="ECO:0007744" key="9">
    <source>
        <dbReference type="PDB" id="5VHC"/>
    </source>
</evidence>
<evidence type="ECO:0007744" key="10">
    <source>
        <dbReference type="PDB" id="5VHD"/>
    </source>
</evidence>
<evidence type="ECO:0007829" key="11">
    <source>
        <dbReference type="PDB" id="5VHA"/>
    </source>
</evidence>
<evidence type="ECO:0007829" key="12">
    <source>
        <dbReference type="PDB" id="5VHC"/>
    </source>
</evidence>
<evidence type="ECO:0007829" key="13">
    <source>
        <dbReference type="PDB" id="5VHD"/>
    </source>
</evidence>
<gene>
    <name evidence="3" type="primary">DHX36</name>
</gene>
<feature type="chain" id="PRO_0000445444" description="ATP-dependent DNA/RNA helicase DHX36">
    <location>
        <begin position="1"/>
        <end position="1010"/>
    </location>
</feature>
<feature type="domain" description="Helicase ATP-binding" evidence="4">
    <location>
        <begin position="219"/>
        <end position="389"/>
    </location>
</feature>
<feature type="domain" description="Helicase C-terminal" evidence="5">
    <location>
        <begin position="479"/>
        <end position="649"/>
    </location>
</feature>
<feature type="region of interest" description="Necessary for nuclear and nucleolar caps localizations" evidence="3">
    <location>
        <begin position="1"/>
        <end position="202"/>
    </location>
</feature>
<feature type="region of interest" description="Required for the pre-miR-134 transport" evidence="1">
    <location>
        <begin position="1"/>
        <end position="107"/>
    </location>
</feature>
<feature type="region of interest" description="Disordered" evidence="6">
    <location>
        <begin position="1"/>
        <end position="63"/>
    </location>
</feature>
<feature type="region of interest" description="Required for recruitment to cytoplasmic stress granules" evidence="3">
    <location>
        <begin position="1"/>
        <end position="54"/>
    </location>
</feature>
<feature type="region of interest" description="Required for G4-DNA- and G4-RNA-binding" evidence="3">
    <location>
        <begin position="56"/>
        <end position="108"/>
    </location>
</feature>
<feature type="region of interest" description="DSM (DHX36-specific motif)" evidence="7">
    <location>
        <begin position="56"/>
        <end position="78"/>
    </location>
</feature>
<feature type="region of interest" description="RecA-like domain 1" evidence="7">
    <location>
        <begin position="109"/>
        <end position="388"/>
    </location>
</feature>
<feature type="region of interest" description="Necessary for interaction with single-stranded DNA at the 3'-end of the G4-DNA structure" evidence="7">
    <location>
        <begin position="267"/>
        <end position="319"/>
    </location>
</feature>
<feature type="region of interest" description="RecA-like domain 2" evidence="7">
    <location>
        <begin position="389"/>
        <end position="630"/>
    </location>
</feature>
<feature type="region of interest" description="Necessary for interaction with single-stranded DNA at the 3'-end of the G4-DNA structure" evidence="7">
    <location>
        <begin position="500"/>
        <end position="559"/>
    </location>
</feature>
<feature type="region of interest" description="WH domain" evidence="7">
    <location>
        <begin position="631"/>
        <end position="700"/>
    </location>
</feature>
<feature type="region of interest" description="Necessary for interaction with single-stranded DNA at the 3'-end of the G4-DNA structure" evidence="7">
    <location>
        <begin position="640"/>
        <end position="699"/>
    </location>
</feature>
<feature type="region of interest" description="OB-fold-like subdomains" evidence="7">
    <location>
        <begin position="843"/>
        <end position="907"/>
    </location>
</feature>
<feature type="region of interest" description="Necessary for interaction with single-stranded DNA at the 3'-end of the G4-DNA structure" evidence="7">
    <location>
        <begin position="851"/>
        <end position="862"/>
    </location>
</feature>
<feature type="region of interest" description="Necessary for interaction with single-stranded DNA at the 3'-end of the G4-DNA structure" evidence="7">
    <location>
        <begin position="872"/>
        <end position="902"/>
    </location>
</feature>
<feature type="short sequence motif" description="DEAH box" evidence="4">
    <location>
        <begin position="336"/>
        <end position="339"/>
    </location>
</feature>
<feature type="short sequence motif" description="Nuclear localization signal" evidence="3">
    <location>
        <begin position="519"/>
        <end position="530"/>
    </location>
</feature>
<feature type="compositionally biased region" description="Gly residues" evidence="6">
    <location>
        <begin position="16"/>
        <end position="51"/>
    </location>
</feature>
<feature type="binding site" evidence="7 9 10">
    <location>
        <begin position="235"/>
        <end position="240"/>
    </location>
    <ligand>
        <name>ATP</name>
        <dbReference type="ChEBI" id="CHEBI:30616"/>
    </ligand>
</feature>
<feature type="binding site" evidence="7 9">
    <location>
        <position position="337"/>
    </location>
    <ligand>
        <name>Mg(2+)</name>
        <dbReference type="ChEBI" id="CHEBI:18420"/>
    </ligand>
</feature>
<feature type="binding site" evidence="7 9">
    <location>
        <position position="339"/>
    </location>
    <ligand>
        <name>Mg(2+)</name>
        <dbReference type="ChEBI" id="CHEBI:18420"/>
    </ligand>
</feature>
<feature type="binding site" evidence="7 10">
    <location>
        <position position="559"/>
    </location>
    <ligand>
        <name>ATP</name>
        <dbReference type="ChEBI" id="CHEBI:30616"/>
    </ligand>
</feature>
<feature type="binding site" evidence="7 9 10">
    <location>
        <begin position="604"/>
        <end position="607"/>
    </location>
    <ligand>
        <name>ATP</name>
        <dbReference type="ChEBI" id="CHEBI:30616"/>
    </ligand>
</feature>
<feature type="modified residue" description="N6-acetyllysine" evidence="3">
    <location>
        <position position="949"/>
    </location>
</feature>
<feature type="modified residue" description="Phosphoserine" evidence="3">
    <location>
        <position position="965"/>
    </location>
</feature>
<feature type="mutagenesis site" description="Decreases G4-DNA-binding; when associated with A-65." evidence="7">
    <original>R</original>
    <variation>A</variation>
    <location>
        <position position="63"/>
    </location>
</feature>
<feature type="mutagenesis site" description="Decreases G4-DNA-binding; when associated with A-63." evidence="7">
    <original>I</original>
    <variation>A</variation>
    <location>
        <position position="65"/>
    </location>
</feature>
<feature type="mutagenesis site" description="Decreases strongly G4-DNA-binding." evidence="7">
    <original>Y</original>
    <variation>A</variation>
    <location>
        <position position="69"/>
    </location>
</feature>
<feature type="mutagenesis site" description="Decreases G4-DNA-binding; when associated with G-77 and G-78." evidence="7">
    <original>K</original>
    <variation>G</variation>
    <location>
        <position position="76"/>
    </location>
</feature>
<feature type="mutagenesis site" description="Decreases G4-DNA-binding; when associated with G-76 and G-78." evidence="7">
    <original>N</original>
    <variation>G</variation>
    <location>
        <position position="77"/>
    </location>
</feature>
<feature type="mutagenesis site" description="Decreases G4-DNA-binding; when associated with G-76 and G-77." evidence="7">
    <original>K</original>
    <variation>G</variation>
    <location>
        <position position="78"/>
    </location>
</feature>
<feature type="helix" evidence="11">
    <location>
        <begin position="170"/>
        <end position="173"/>
    </location>
</feature>
<feature type="helix" evidence="11">
    <location>
        <begin position="180"/>
        <end position="193"/>
    </location>
</feature>
<feature type="helix" evidence="11">
    <location>
        <begin position="197"/>
        <end position="206"/>
    </location>
</feature>
<feature type="helix" evidence="11">
    <location>
        <begin position="210"/>
        <end position="213"/>
    </location>
</feature>
<feature type="helix" evidence="11">
    <location>
        <begin position="215"/>
        <end position="224"/>
    </location>
</feature>
<feature type="strand" evidence="11">
    <location>
        <begin position="226"/>
        <end position="232"/>
    </location>
</feature>
<feature type="helix" evidence="11">
    <location>
        <begin position="238"/>
        <end position="252"/>
    </location>
</feature>
<feature type="helix" evidence="11">
    <location>
        <begin position="256"/>
        <end position="258"/>
    </location>
</feature>
<feature type="strand" evidence="11">
    <location>
        <begin position="260"/>
        <end position="267"/>
    </location>
</feature>
<feature type="helix" evidence="11">
    <location>
        <begin position="268"/>
        <end position="281"/>
    </location>
</feature>
<feature type="strand" evidence="11">
    <location>
        <begin position="290"/>
        <end position="296"/>
    </location>
</feature>
<feature type="strand" evidence="11">
    <location>
        <begin position="299"/>
        <end position="301"/>
    </location>
</feature>
<feature type="strand" evidence="11">
    <location>
        <begin position="305"/>
        <end position="313"/>
    </location>
</feature>
<feature type="helix" evidence="11">
    <location>
        <begin position="314"/>
        <end position="323"/>
    </location>
</feature>
<feature type="strand" evidence="11">
    <location>
        <begin position="331"/>
        <end position="335"/>
    </location>
</feature>
<feature type="helix" evidence="11">
    <location>
        <begin position="343"/>
        <end position="355"/>
    </location>
</feature>
<feature type="helix" evidence="11">
    <location>
        <begin position="356"/>
        <end position="358"/>
    </location>
</feature>
<feature type="strand" evidence="11">
    <location>
        <begin position="363"/>
        <end position="368"/>
    </location>
</feature>
<feature type="helix" evidence="11">
    <location>
        <begin position="373"/>
        <end position="379"/>
    </location>
</feature>
<feature type="strand" evidence="11">
    <location>
        <begin position="385"/>
        <end position="388"/>
    </location>
</feature>
<feature type="strand" evidence="11">
    <location>
        <begin position="395"/>
        <end position="398"/>
    </location>
</feature>
<feature type="helix" evidence="11">
    <location>
        <begin position="400"/>
        <end position="407"/>
    </location>
</feature>
<feature type="helix" evidence="11">
    <location>
        <begin position="433"/>
        <end position="453"/>
    </location>
</feature>
<feature type="helix" evidence="11">
    <location>
        <begin position="458"/>
        <end position="466"/>
    </location>
</feature>
<feature type="strand" evidence="11">
    <location>
        <begin position="469"/>
        <end position="471"/>
    </location>
</feature>
<feature type="helix" evidence="11">
    <location>
        <begin position="474"/>
        <end position="487"/>
    </location>
</feature>
<feature type="strand" evidence="11">
    <location>
        <begin position="492"/>
        <end position="496"/>
    </location>
</feature>
<feature type="helix" evidence="11">
    <location>
        <begin position="500"/>
        <end position="511"/>
    </location>
</feature>
<feature type="helix" evidence="11">
    <location>
        <begin position="514"/>
        <end position="517"/>
    </location>
</feature>
<feature type="strand" evidence="11">
    <location>
        <begin position="521"/>
        <end position="526"/>
    </location>
</feature>
<feature type="helix" evidence="11">
    <location>
        <begin position="532"/>
        <end position="535"/>
    </location>
</feature>
<feature type="helix" evidence="12">
    <location>
        <begin position="537"/>
        <end position="539"/>
    </location>
</feature>
<feature type="strand" evidence="11">
    <location>
        <begin position="547"/>
        <end position="552"/>
    </location>
</feature>
<feature type="helix" evidence="11">
    <location>
        <begin position="554"/>
        <end position="557"/>
    </location>
</feature>
<feature type="strand" evidence="11">
    <location>
        <begin position="565"/>
        <end position="570"/>
    </location>
</feature>
<feature type="strand" evidence="11">
    <location>
        <begin position="572"/>
        <end position="580"/>
    </location>
</feature>
<feature type="turn" evidence="11">
    <location>
        <begin position="581"/>
        <end position="584"/>
    </location>
</feature>
<feature type="strand" evidence="11">
    <location>
        <begin position="585"/>
        <end position="592"/>
    </location>
</feature>
<feature type="helix" evidence="11">
    <location>
        <begin position="595"/>
        <end position="604"/>
    </location>
</feature>
<feature type="strand" evidence="11">
    <location>
        <begin position="605"/>
        <end position="609"/>
    </location>
</feature>
<feature type="strand" evidence="11">
    <location>
        <begin position="611"/>
        <end position="617"/>
    </location>
</feature>
<feature type="helix" evidence="11">
    <location>
        <begin position="619"/>
        <end position="622"/>
    </location>
</feature>
<feature type="helix" evidence="11">
    <location>
        <begin position="632"/>
        <end position="634"/>
    </location>
</feature>
<feature type="helix" evidence="11">
    <location>
        <begin position="639"/>
        <end position="647"/>
    </location>
</feature>
<feature type="helix" evidence="11">
    <location>
        <begin position="653"/>
        <end position="659"/>
    </location>
</feature>
<feature type="strand" evidence="11">
    <location>
        <begin position="660"/>
        <end position="662"/>
    </location>
</feature>
<feature type="helix" evidence="11">
    <location>
        <begin position="666"/>
        <end position="678"/>
    </location>
</feature>
<feature type="helix" evidence="11">
    <location>
        <begin position="690"/>
        <end position="696"/>
    </location>
</feature>
<feature type="strand" evidence="11">
    <location>
        <begin position="698"/>
        <end position="700"/>
    </location>
</feature>
<feature type="helix" evidence="11">
    <location>
        <begin position="702"/>
        <end position="713"/>
    </location>
</feature>
<feature type="helix" evidence="11">
    <location>
        <begin position="717"/>
        <end position="727"/>
    </location>
</feature>
<feature type="helix" evidence="11">
    <location>
        <begin position="740"/>
        <end position="751"/>
    </location>
</feature>
<feature type="helix" evidence="11">
    <location>
        <begin position="757"/>
        <end position="773"/>
    </location>
</feature>
<feature type="helix" evidence="11">
    <location>
        <begin position="776"/>
        <end position="785"/>
    </location>
</feature>
<feature type="helix" evidence="11">
    <location>
        <begin position="790"/>
        <end position="809"/>
    </location>
</feature>
<feature type="strand" evidence="11">
    <location>
        <begin position="812"/>
        <end position="816"/>
    </location>
</feature>
<feature type="helix" evidence="11">
    <location>
        <begin position="821"/>
        <end position="823"/>
    </location>
</feature>
<feature type="turn" evidence="11">
    <location>
        <begin position="825"/>
        <end position="828"/>
    </location>
</feature>
<feature type="helix" evidence="11">
    <location>
        <begin position="830"/>
        <end position="841"/>
    </location>
</feature>
<feature type="strand" evidence="11">
    <location>
        <begin position="845"/>
        <end position="849"/>
    </location>
</feature>
<feature type="strand" evidence="11">
    <location>
        <begin position="852"/>
        <end position="855"/>
    </location>
</feature>
<feature type="strand" evidence="11">
    <location>
        <begin position="860"/>
        <end position="862"/>
    </location>
</feature>
<feature type="strand" evidence="11">
    <location>
        <begin position="864"/>
        <end position="866"/>
    </location>
</feature>
<feature type="strand" evidence="13">
    <location>
        <begin position="868"/>
        <end position="871"/>
    </location>
</feature>
<feature type="strand" evidence="12">
    <location>
        <begin position="875"/>
        <end position="879"/>
    </location>
</feature>
<feature type="strand" evidence="11">
    <location>
        <begin position="884"/>
        <end position="890"/>
    </location>
</feature>
<feature type="strand" evidence="11">
    <location>
        <begin position="895"/>
        <end position="898"/>
    </location>
</feature>
<feature type="strand" evidence="11">
    <location>
        <begin position="904"/>
        <end position="906"/>
    </location>
</feature>
<feature type="helix" evidence="11">
    <location>
        <begin position="909"/>
        <end position="915"/>
    </location>
</feature>
<feature type="strand" evidence="11">
    <location>
        <begin position="919"/>
        <end position="923"/>
    </location>
</feature>
<feature type="strand" evidence="11">
    <location>
        <begin position="925"/>
        <end position="932"/>
    </location>
</feature>
<feature type="turn" evidence="11">
    <location>
        <begin position="933"/>
        <end position="935"/>
    </location>
</feature>
<feature type="strand" evidence="11">
    <location>
        <begin position="936"/>
        <end position="938"/>
    </location>
</feature>
<feature type="helix" evidence="11">
    <location>
        <begin position="943"/>
        <end position="964"/>
    </location>
</feature>
<feature type="helix" evidence="11">
    <location>
        <begin position="971"/>
        <end position="973"/>
    </location>
</feature>
<feature type="helix" evidence="11">
    <location>
        <begin position="977"/>
        <end position="989"/>
    </location>
</feature>
<comment type="function">
    <text evidence="1 2 3 7">Multifunctional ATP-dependent helicase that unwinds G-quadruplex (G4) structures (PubMed:29899445). Plays a role in many biological processes such as genomic integrity, gene expression regulations and as a sensor to initiate antiviral responses (By similarity). G4 structures correspond to helical structures containing guanine tetrads (PubMed:29899445). Binds with high affinity to and unwinds G4 structures that are formed in nucleic acids (G4-DNA and G4-RNA) (By similarity) (PubMed:29899445). Plays a role in genomic integrity. Converts the G4-RNA structure present in telomerase RNA template component (TREC) into a double-stranded RNA to promote P1 helix formation that acts as a template boundary ensuring accurate reverse transcription (By similarity). Plays a role in transcriptional regulation. Resolves G4-DNA structures in promoters of genes, such as YY1, KIT/c-kit and ALPL and positively regulates their expression (By similarity). Plays a role in post-transcriptional regulation. Unwinds a G4-RNA structure located in the 3'-UTR polyadenylation site of the pre-mRNA TP53 and stimulates TP53 pre-mRNA 3'-end processing in response to ultraviolet (UV)-induced DNA damage (By similarity). Binds to the precursor-microRNA-134 (pre-miR-134) terminal loop and regulates its transport into the synapto-dendritic compartment (By similarity). Involved in the pre-miR-134-dependent inhibition of target gene expression and the control of dendritic spine size (By similarity). Plays a role in the regulation of cytoplasmic mRNA translation and mRNA stability (By similarity). Binds to both G4-RNA structures and alternative non-quadruplex-forming sequence within the 3'-UTR of the PITX1 mRNA regulating negatively PITX1 protein expression (By similarity). Binds to both G4-RNA structure in the 5'-UTR and AU-rich elements (AREs) localized in the 3'-UTR of NKX2-5 mRNA to either stimulate protein translation or induce mRNA decay in an ELAVL1-dependent manner, respectively (By similarity). Also binds to ARE sequences present in several mRNAs mediating exosome-mediated 3'-5' mRNA degradation (By similarity). Involved in cytoplasmic urokinase-type plasminogen activator (uPA) mRNA decay (By similarity). Component of a multi-helicase-TICAM1 complex that acts as a cytoplasmic sensor of viral double-stranded RNA (dsRNA) and plays a role in the activation of a cascade of antiviral responses including the induction of pro-inflammatory cytokines via the adapter molecule TICAM1 (By similarity). Required for the early embryonic development and hematopoiesis. Involved in the regulation of cardioblast differentiation and proliferation during heart development. Involved in spermatogonia differentiation. May play a role in ossification (By similarity).</text>
</comment>
<comment type="catalytic activity">
    <reaction evidence="3">
        <text>ATP + H2O = ADP + phosphate + H(+)</text>
        <dbReference type="Rhea" id="RHEA:13065"/>
        <dbReference type="ChEBI" id="CHEBI:15377"/>
        <dbReference type="ChEBI" id="CHEBI:15378"/>
        <dbReference type="ChEBI" id="CHEBI:30616"/>
        <dbReference type="ChEBI" id="CHEBI:43474"/>
        <dbReference type="ChEBI" id="CHEBI:456216"/>
        <dbReference type="EC" id="3.6.4.12"/>
    </reaction>
</comment>
<comment type="catalytic activity">
    <reaction evidence="3">
        <text>ATP + H2O = ADP + phosphate + H(+)</text>
        <dbReference type="Rhea" id="RHEA:13065"/>
        <dbReference type="ChEBI" id="CHEBI:15377"/>
        <dbReference type="ChEBI" id="CHEBI:15378"/>
        <dbReference type="ChEBI" id="CHEBI:30616"/>
        <dbReference type="ChEBI" id="CHEBI:43474"/>
        <dbReference type="ChEBI" id="CHEBI:456216"/>
        <dbReference type="EC" id="3.6.4.13"/>
    </reaction>
</comment>
<comment type="cofactor">
    <cofactor evidence="7">
        <name>Mg(2+)</name>
        <dbReference type="ChEBI" id="CHEBI:18420"/>
    </cofactor>
</comment>
<comment type="activity regulation">
    <text evidence="3">ATPase activity is enhanced in the presence of homomeric poly(U) RNAs, but not by double-stranded DNA (dsDNA), double-stranded RNA (dsRNA) and tRNA.</text>
</comment>
<comment type="subunit">
    <text evidence="2 3">Found in a multi-helicase-TICAM1 complex at least composed of DHX36, DDX1, DDX21 and TICAM1; this complex exists in resting cells with or without dsRNA poly(I:C) ligand stimulation. Interacts (via C-terminus) with TICAM1 (via TIR domain). Interacts (via C-terminus) with DDX21; this interaction serves as bridges to TICAM1 (By similarity). Interacts with TERT; this interaction is dependent on the ability of DHX36 to bind to the G-quadruplex RNA (G4-RNA) structure present in the telomerase RNA template component (TERC). Interacts with DKC1; this interaction is dependent on the ability of DHX36 to bind to the G4-RNA structure present in TERC. Interacts with PARN; this interaction stimulates PARN to enhance uPA mRNA decay. Interacts with EXOSC3; this interaction occurs in a RNase-insensitive manner. Interacts with EXOSC10; this interaction occurs in a RNase-insensitive manner. Interacts with ILF3; this interaction occurs in a RNA-dependent manner. Interacts with ELAVL1; this interaction occurs in an RNA-dependent manner. Interacts with DDX5; this interaction occurs in a RNA-dependent manner. Interacts with DDX17; this interaction occurs in a RNA-dependent manner. Interacts with HDAC1; this interaction occurs in a RNA-dependent manner (By similarity). Interacts with HDAC3; this interaction occurs in a RNA-dependent manner (By similarity). Interacts with HDAC4 (By similarity). Interacts with AGO1. Interacts with AGO2 (By similarity). Interacts with ERCC6 (By similarity).</text>
</comment>
<comment type="subcellular location">
    <subcellularLocation>
        <location evidence="3">Nucleus</location>
    </subcellularLocation>
    <subcellularLocation>
        <location evidence="3">Cytoplasm</location>
    </subcellularLocation>
    <subcellularLocation>
        <location evidence="2">Cytoplasm</location>
        <location evidence="2">Cytosol</location>
    </subcellularLocation>
    <subcellularLocation>
        <location evidence="3">Cytoplasm</location>
        <location evidence="3">Stress granule</location>
    </subcellularLocation>
    <subcellularLocation>
        <location evidence="3">Nucleus speckle</location>
    </subcellularLocation>
    <subcellularLocation>
        <location evidence="3">Chromosome</location>
        <location evidence="3">Telomere</location>
    </subcellularLocation>
    <subcellularLocation>
        <location evidence="2">Mitochondrion</location>
    </subcellularLocation>
    <subcellularLocation>
        <location evidence="1">Perikaryon</location>
    </subcellularLocation>
    <subcellularLocation>
        <location evidence="1">Cell projection</location>
        <location evidence="1">Dendrite</location>
    </subcellularLocation>
    <subcellularLocation>
        <location evidence="1">Cell projection</location>
        <location evidence="1">Axon</location>
    </subcellularLocation>
    <text evidence="2 3">Predominantly localized in the nucleus. Colocalizes with SRSF2 in nuclear speckles. Colocalizes with DDX5 in nucleolar caps upon transcription inhibition. Accumulates and colocalized with TIA1 in cytoplasmic stress granules (SGs) in an arsenite-, heat shock- and RNA-binding-dependent manner. Shuttles into and out of SGs in an ATPase-dependent manner (By similarity). Colocalizes in the cytosol with the multi-helicase-TICAM1 complex that translocates to the mitochondria upon poly(I:C) stimulation (By similarity).</text>
</comment>
<comment type="domain">
    <text evidence="3 7">The DHX36-specific motif (DSM) form folds into a DNA-binding-induced alpha-helix that together with the oligonucleotide and oligosaccharide-binding-fold-like (OB-fold-like) subdomain bind to Myc-promoter G4-DNA-containing structure in an ATP-dependent manner. Upon G4-DNA-binding, DHX36 pulls on DSM in the 3'-direction, inducing rearrangement of the RecA-like 1 and 2 and the degenerate-winged-helix (WH) regions; these rearrangements are probably responsible for the ATP-independent repetitive G4-DNA unfolding activity, one residue at a time. Upon resolving of G4-DNA into separate nucleotide strands, and ATP hydrolysis, the apoprotein of DHX36 seems incompatible with G4-DNA-binding (PubMed:29899445). The N-terminus is necessary for its recruitment to cytoplasmic stress granules (SGs) upon arsenite-induced treatment (By similarity).</text>
</comment>
<organism>
    <name type="scientific">Bos taurus</name>
    <name type="common">Bovine</name>
    <dbReference type="NCBI Taxonomy" id="9913"/>
    <lineage>
        <taxon>Eukaryota</taxon>
        <taxon>Metazoa</taxon>
        <taxon>Chordata</taxon>
        <taxon>Craniata</taxon>
        <taxon>Vertebrata</taxon>
        <taxon>Euteleostomi</taxon>
        <taxon>Mammalia</taxon>
        <taxon>Eutheria</taxon>
        <taxon>Laurasiatheria</taxon>
        <taxon>Artiodactyla</taxon>
        <taxon>Ruminantia</taxon>
        <taxon>Pecora</taxon>
        <taxon>Bovidae</taxon>
        <taxon>Bovinae</taxon>
        <taxon>Bos</taxon>
    </lineage>
</organism>
<reference key="1">
    <citation type="journal article" date="2009" name="Genome Biol.">
        <title>A whole-genome assembly of the domestic cow, Bos taurus.</title>
        <authorList>
            <person name="Zimin A.V."/>
            <person name="Delcher A.L."/>
            <person name="Florea L."/>
            <person name="Kelley D.R."/>
            <person name="Schatz M.C."/>
            <person name="Puiu D."/>
            <person name="Hanrahan F."/>
            <person name="Pertea G."/>
            <person name="Van Tassell C.P."/>
            <person name="Sonstegard T.S."/>
            <person name="Marcais G."/>
            <person name="Roberts M."/>
            <person name="Subramanian P."/>
            <person name="Yorke J.A."/>
            <person name="Salzberg S.L."/>
        </authorList>
    </citation>
    <scope>NUCLEOTIDE SEQUENCE [LARGE SCALE GENOMIC DNA]</scope>
    <source>
        <strain>Hereford</strain>
    </source>
</reference>
<reference key="2">
    <citation type="submission" date="2006-08" db="EMBL/GenBank/DDBJ databases">
        <authorList>
            <consortium name="NIH - Mammalian Gene Collection (MGC) project"/>
        </authorList>
    </citation>
    <scope>NUCLEOTIDE SEQUENCE [LARGE SCALE MRNA]</scope>
    <source>
        <strain>Hereford</strain>
        <tissue>Brain cortex</tissue>
    </source>
</reference>
<reference key="3">
    <citation type="journal article" date="2018" name="Nature">
        <title>Structural basis of G-quadruplex unfolding by the DEAH/RHA helicase DHX36.</title>
        <authorList>
            <person name="Chen M.C."/>
            <person name="Tippana R."/>
            <person name="Demeshkina N.A."/>
            <person name="Murat P."/>
            <person name="Balasubramanian S."/>
            <person name="Myong S."/>
            <person name="Ferre-D'Amare A.R."/>
        </authorList>
    </citation>
    <scope>X-RAY CRYSTALLOGRAPHY (2.23 ANGSTROMS) OF 56-1010 IN COMPLEXES WITH MYC-PROMOTER G4-DNA-CONTAINING STRUCTURE; ATP AND MAGNESIUM ION</scope>
    <scope>FUNCTION</scope>
    <scope>G4-DNA-BINDING</scope>
    <scope>G4-RNA-BINDING</scope>
    <scope>ATP-BINDING</scope>
    <scope>MAGNESIUM-BINDING SITES</scope>
    <scope>REGION DSM MOTIF</scope>
    <scope>REGION RECA-LIKE DOMAINS</scope>
    <scope>REGION WH DOMAIN</scope>
    <scope>REGION OB-FOLD-LIKE SUBDOMAINS</scope>
    <scope>MUTAGENESIS OF ARG-63; ILE-65; TYR-69; LYS-76; ASN-77 AND LYS-78</scope>
</reference>
<proteinExistence type="evidence at protein level"/>
<name>DHX36_BOVIN</name>
<accession>Q05B79</accession>